<comment type="function">
    <text evidence="3">Catalyzes the reversible isomerization of methylmalonyl-CoA (MMCoA) (generated from branched-chain amino acid metabolism and degradation of dietary odd chain fatty acids and cholesterol) to succinyl-CoA (3-carboxypropionyl-CoA), a key intermediate of the tricarboxylic acid cycle.</text>
</comment>
<comment type="catalytic activity">
    <reaction evidence="3">
        <text>(R)-methylmalonyl-CoA = succinyl-CoA</text>
        <dbReference type="Rhea" id="RHEA:22888"/>
        <dbReference type="ChEBI" id="CHEBI:57292"/>
        <dbReference type="ChEBI" id="CHEBI:57326"/>
        <dbReference type="EC" id="5.4.99.2"/>
    </reaction>
    <physiologicalReaction direction="left-to-right" evidence="3">
        <dbReference type="Rhea" id="RHEA:22889"/>
    </physiologicalReaction>
</comment>
<comment type="cofactor">
    <cofactor evidence="3">
        <name>adenosylcob(III)alamin</name>
        <dbReference type="ChEBI" id="CHEBI:18408"/>
    </cofactor>
</comment>
<comment type="activity regulation">
    <text evidence="3">Inhibited by itaconyl-CoA, a metabolite that inactivates the coenzyme B12 cofactor.</text>
</comment>
<comment type="subunit">
    <text evidence="3">Homodimer. Interacts (the apoenzyme form) with MMAA; the interaction is GTP dependent.</text>
</comment>
<comment type="subcellular location">
    <subcellularLocation>
        <location evidence="3">Mitochondrion matrix</location>
    </subcellularLocation>
    <subcellularLocation>
        <location evidence="3">Mitochondrion</location>
    </subcellularLocation>
    <subcellularLocation>
        <location evidence="3">Cytoplasm</location>
    </subcellularLocation>
</comment>
<comment type="similarity">
    <text evidence="5">Belongs to the methylmalonyl-CoA mutase family.</text>
</comment>
<protein>
    <recommendedName>
        <fullName>Methylmalonyl-CoA mutase, mitochondrial</fullName>
        <shortName>MCM</shortName>
        <ecNumber evidence="3">5.4.99.2</ecNumber>
    </recommendedName>
    <alternativeName>
        <fullName>Methylmalonyl-CoA isomerase</fullName>
    </alternativeName>
</protein>
<feature type="transit peptide" description="Mitochondrion" evidence="1">
    <location>
        <begin position="1"/>
        <end position="32"/>
    </location>
</feature>
<feature type="chain" id="PRO_0000324096" description="Methylmalonyl-CoA mutase, mitochondrial">
    <location>
        <begin position="33"/>
        <end position="750"/>
    </location>
</feature>
<feature type="domain" description="B12-binding" evidence="4">
    <location>
        <begin position="614"/>
        <end position="746"/>
    </location>
</feature>
<feature type="binding site" evidence="3">
    <location>
        <position position="50"/>
    </location>
    <ligand>
        <name>malonyl-CoA</name>
        <dbReference type="ChEBI" id="CHEBI:57384"/>
    </ligand>
</feature>
<feature type="binding site" evidence="3">
    <location>
        <begin position="96"/>
        <end position="99"/>
    </location>
    <ligand>
        <name>malonyl-CoA</name>
        <dbReference type="ChEBI" id="CHEBI:57384"/>
    </ligand>
</feature>
<feature type="binding site" evidence="3">
    <location>
        <begin position="106"/>
        <end position="110"/>
    </location>
    <ligand>
        <name>malonyl-CoA</name>
        <dbReference type="ChEBI" id="CHEBI:57384"/>
    </ligand>
</feature>
<feature type="binding site" evidence="3">
    <location>
        <begin position="216"/>
        <end position="218"/>
    </location>
    <ligand>
        <name>malonyl-CoA</name>
        <dbReference type="ChEBI" id="CHEBI:57384"/>
    </ligand>
</feature>
<feature type="binding site" evidence="3">
    <location>
        <position position="228"/>
    </location>
    <ligand>
        <name>malonyl-CoA</name>
        <dbReference type="ChEBI" id="CHEBI:57384"/>
    </ligand>
</feature>
<feature type="binding site" evidence="3">
    <location>
        <position position="255"/>
    </location>
    <ligand>
        <name>malonyl-CoA</name>
        <dbReference type="ChEBI" id="CHEBI:57384"/>
    </ligand>
</feature>
<feature type="binding site" evidence="3">
    <location>
        <position position="265"/>
    </location>
    <ligand>
        <name>malonyl-CoA</name>
        <dbReference type="ChEBI" id="CHEBI:57384"/>
    </ligand>
</feature>
<feature type="binding site" evidence="3">
    <location>
        <begin position="304"/>
        <end position="306"/>
    </location>
    <ligand>
        <name>malonyl-CoA</name>
        <dbReference type="ChEBI" id="CHEBI:57384"/>
    </ligand>
</feature>
<feature type="binding site" description="axial binding residue" evidence="3">
    <location>
        <position position="627"/>
    </location>
    <ligand>
        <name>adenosylcob(III)alamin</name>
        <dbReference type="ChEBI" id="CHEBI:18408"/>
    </ligand>
    <ligandPart>
        <name>Co</name>
        <dbReference type="ChEBI" id="CHEBI:27638"/>
    </ligandPart>
</feature>
<feature type="modified residue" description="N6-acetyllysine" evidence="2">
    <location>
        <position position="89"/>
    </location>
</feature>
<feature type="modified residue" description="N6-acetyllysine" evidence="2">
    <location>
        <position position="212"/>
    </location>
</feature>
<feature type="modified residue" description="N6-acetyllysine" evidence="2">
    <location>
        <position position="335"/>
    </location>
</feature>
<feature type="modified residue" description="N6-succinyllysine" evidence="2">
    <location>
        <position position="343"/>
    </location>
</feature>
<feature type="modified residue" description="Phosphoserine" evidence="3">
    <location>
        <position position="481"/>
    </location>
</feature>
<feature type="modified residue" description="N6-succinyllysine" evidence="2">
    <location>
        <position position="595"/>
    </location>
</feature>
<feature type="modified residue" description="N6-acetyllysine" evidence="2">
    <location>
        <position position="602"/>
    </location>
</feature>
<sequence>MLRAKNQLFLLSPHYLKQVKESSGSRLIQQRLLHQQQPLHPEWAALAKKQLKGKNPEDLIWHTPEGISIKPLYSKRDTMDLPEELPGVKPFTRGPYPTMYTFRPWTIRQYAGFSTVEESNKFYKDNIKAGQQGLSVAFDLATHRGYDSDNPRVRGDVGMAGVAIDTVEDTKILFDGIPLEKMSVSMTMNGAVIPVLANFIVTGEEQGVPKEKLTGTIQNDILKEFMVRNTYIFPPEPSMKIIADIFEYTAKHMPKFNSISISGYHMQEAGADAILELAYTLADGLEYSRTGLQAGLTIDEFAPRLSFFWGIGMNFYMEITKMRAGRRLWAHLIEKMFQPKNSKSLLLRAHCQTSGWSLTEQDPYNNIVRTAIEAMAAVFGGTQSLHTNSFDEALGLPTVKSARIARNTQIIIQEESGIPKVADPWGGSYMMECLTNDVYDAALKLINEIEEMGGMAKAVAEGIPKLRIEECAARRQARIDSGSEVIVGVNKYQLEKEDAVEVLAIDNTSVRNRQIEKLKKIKSSRDQALAERCLAALTECAASGDGNILALAVDASRARCTVGEITDALKKVFGEHKANDRMVSGAYRQEFGESKEITSAIKRVHKFMEREGRRPRLLVAKMGQDGHDRGAKVIATGFADLGFDVDIGPLFQTPREVAQQAVDADVHAVGVSTLAAGHKTLVPELIKELNSLGRPDILVMCGGVIPPQDYEFLFEVGVSNVFGPGTRIPKAAVQVLDDIEKCLEKKQQSV</sequence>
<accession>Q5RFN2</accession>
<name>MUTA_PONAB</name>
<proteinExistence type="evidence at transcript level"/>
<reference key="1">
    <citation type="submission" date="2004-11" db="EMBL/GenBank/DDBJ databases">
        <authorList>
            <consortium name="The German cDNA consortium"/>
        </authorList>
    </citation>
    <scope>NUCLEOTIDE SEQUENCE [LARGE SCALE MRNA]</scope>
    <source>
        <tissue>Kidney</tissue>
    </source>
</reference>
<keyword id="KW-0007">Acetylation</keyword>
<keyword id="KW-0846">Cobalamin</keyword>
<keyword id="KW-0170">Cobalt</keyword>
<keyword id="KW-0963">Cytoplasm</keyword>
<keyword id="KW-0413">Isomerase</keyword>
<keyword id="KW-0479">Metal-binding</keyword>
<keyword id="KW-0496">Mitochondrion</keyword>
<keyword id="KW-0597">Phosphoprotein</keyword>
<keyword id="KW-1185">Reference proteome</keyword>
<keyword id="KW-0809">Transit peptide</keyword>
<gene>
    <name type="primary">MMUT</name>
    <name type="synonym">MUT</name>
</gene>
<evidence type="ECO:0000250" key="1"/>
<evidence type="ECO:0000250" key="2">
    <source>
        <dbReference type="UniProtKB" id="P16332"/>
    </source>
</evidence>
<evidence type="ECO:0000250" key="3">
    <source>
        <dbReference type="UniProtKB" id="P22033"/>
    </source>
</evidence>
<evidence type="ECO:0000255" key="4">
    <source>
        <dbReference type="PROSITE-ProRule" id="PRU00666"/>
    </source>
</evidence>
<evidence type="ECO:0000305" key="5"/>
<organism>
    <name type="scientific">Pongo abelii</name>
    <name type="common">Sumatran orangutan</name>
    <name type="synonym">Pongo pygmaeus abelii</name>
    <dbReference type="NCBI Taxonomy" id="9601"/>
    <lineage>
        <taxon>Eukaryota</taxon>
        <taxon>Metazoa</taxon>
        <taxon>Chordata</taxon>
        <taxon>Craniata</taxon>
        <taxon>Vertebrata</taxon>
        <taxon>Euteleostomi</taxon>
        <taxon>Mammalia</taxon>
        <taxon>Eutheria</taxon>
        <taxon>Euarchontoglires</taxon>
        <taxon>Primates</taxon>
        <taxon>Haplorrhini</taxon>
        <taxon>Catarrhini</taxon>
        <taxon>Hominidae</taxon>
        <taxon>Pongo</taxon>
    </lineage>
</organism>
<dbReference type="EC" id="5.4.99.2" evidence="3"/>
<dbReference type="EMBL" id="CR857121">
    <property type="protein sequence ID" value="CAH89425.1"/>
    <property type="molecule type" value="mRNA"/>
</dbReference>
<dbReference type="RefSeq" id="NP_001127145.1">
    <property type="nucleotide sequence ID" value="NM_001133673.2"/>
</dbReference>
<dbReference type="SMR" id="Q5RFN2"/>
<dbReference type="FunCoup" id="Q5RFN2">
    <property type="interactions" value="830"/>
</dbReference>
<dbReference type="STRING" id="9601.ENSPPYP00000018666"/>
<dbReference type="GeneID" id="100174196"/>
<dbReference type="KEGG" id="pon:100174196"/>
<dbReference type="CTD" id="4594"/>
<dbReference type="eggNOG" id="ENOG502QQ7X">
    <property type="taxonomic scope" value="Eukaryota"/>
</dbReference>
<dbReference type="InParanoid" id="Q5RFN2"/>
<dbReference type="OrthoDB" id="198977at2759"/>
<dbReference type="Proteomes" id="UP000001595">
    <property type="component" value="Unplaced"/>
</dbReference>
<dbReference type="GO" id="GO:0005737">
    <property type="term" value="C:cytoplasm"/>
    <property type="evidence" value="ECO:0000250"/>
    <property type="project" value="UniProtKB"/>
</dbReference>
<dbReference type="GO" id="GO:0005759">
    <property type="term" value="C:mitochondrial matrix"/>
    <property type="evidence" value="ECO:0000250"/>
    <property type="project" value="UniProtKB"/>
</dbReference>
<dbReference type="GO" id="GO:0005739">
    <property type="term" value="C:mitochondrion"/>
    <property type="evidence" value="ECO:0000250"/>
    <property type="project" value="UniProtKB"/>
</dbReference>
<dbReference type="GO" id="GO:0031419">
    <property type="term" value="F:cobalamin binding"/>
    <property type="evidence" value="ECO:0000250"/>
    <property type="project" value="UniProtKB"/>
</dbReference>
<dbReference type="GO" id="GO:0003924">
    <property type="term" value="F:GTPase activity"/>
    <property type="evidence" value="ECO:0000250"/>
    <property type="project" value="UniProtKB"/>
</dbReference>
<dbReference type="GO" id="GO:0042802">
    <property type="term" value="F:identical protein binding"/>
    <property type="evidence" value="ECO:0000250"/>
    <property type="project" value="UniProtKB"/>
</dbReference>
<dbReference type="GO" id="GO:0046872">
    <property type="term" value="F:metal ion binding"/>
    <property type="evidence" value="ECO:0007669"/>
    <property type="project" value="UniProtKB-KW"/>
</dbReference>
<dbReference type="GO" id="GO:0004494">
    <property type="term" value="F:methylmalonyl-CoA mutase activity"/>
    <property type="evidence" value="ECO:0000250"/>
    <property type="project" value="UniProtKB"/>
</dbReference>
<dbReference type="GO" id="GO:0042803">
    <property type="term" value="F:protein homodimerization activity"/>
    <property type="evidence" value="ECO:0000250"/>
    <property type="project" value="UniProtKB"/>
</dbReference>
<dbReference type="GO" id="GO:0019678">
    <property type="term" value="P:propionate metabolic process, methylmalonyl pathway"/>
    <property type="evidence" value="ECO:0007669"/>
    <property type="project" value="TreeGrafter"/>
</dbReference>
<dbReference type="GO" id="GO:0006790">
    <property type="term" value="P:sulfur compound metabolic process"/>
    <property type="evidence" value="ECO:0007669"/>
    <property type="project" value="UniProtKB-ARBA"/>
</dbReference>
<dbReference type="CDD" id="cd02071">
    <property type="entry name" value="MM_CoA_mut_B12_BD"/>
    <property type="match status" value="1"/>
</dbReference>
<dbReference type="CDD" id="cd03679">
    <property type="entry name" value="MM_CoA_mutase_alpha_like"/>
    <property type="match status" value="1"/>
</dbReference>
<dbReference type="FunFam" id="3.20.20.240:FF:000002">
    <property type="entry name" value="Methylmalonyl-CoA mutase, mitochondrial"/>
    <property type="match status" value="1"/>
</dbReference>
<dbReference type="FunFam" id="3.40.50.280:FF:000002">
    <property type="entry name" value="Methylmalonyl-CoA mutase, mitochondrial"/>
    <property type="match status" value="1"/>
</dbReference>
<dbReference type="Gene3D" id="3.40.50.280">
    <property type="entry name" value="Cobalamin-binding domain"/>
    <property type="match status" value="1"/>
</dbReference>
<dbReference type="Gene3D" id="3.20.20.240">
    <property type="entry name" value="Methylmalonyl-CoA mutase"/>
    <property type="match status" value="1"/>
</dbReference>
<dbReference type="InterPro" id="IPR006159">
    <property type="entry name" value="Acid_CoA_mut_C"/>
</dbReference>
<dbReference type="InterPro" id="IPR016176">
    <property type="entry name" value="Cbl-dep_enz_cat"/>
</dbReference>
<dbReference type="InterPro" id="IPR006158">
    <property type="entry name" value="Cobalamin-bd"/>
</dbReference>
<dbReference type="InterPro" id="IPR036724">
    <property type="entry name" value="Cobalamin-bd_sf"/>
</dbReference>
<dbReference type="InterPro" id="IPR006099">
    <property type="entry name" value="MeMalonylCoA_mutase_a/b_cat"/>
</dbReference>
<dbReference type="InterPro" id="IPR006098">
    <property type="entry name" value="MMCoA_mutase_a_cat"/>
</dbReference>
<dbReference type="NCBIfam" id="TIGR00640">
    <property type="entry name" value="acid_CoA_mut_C"/>
    <property type="match status" value="1"/>
</dbReference>
<dbReference type="NCBIfam" id="TIGR00641">
    <property type="entry name" value="acid_CoA_mut_N"/>
    <property type="match status" value="1"/>
</dbReference>
<dbReference type="NCBIfam" id="NF006944">
    <property type="entry name" value="PRK09426.1"/>
    <property type="match status" value="1"/>
</dbReference>
<dbReference type="PANTHER" id="PTHR48101:SF4">
    <property type="entry name" value="METHYLMALONYL-COA MUTASE, MITOCHONDRIAL"/>
    <property type="match status" value="1"/>
</dbReference>
<dbReference type="PANTHER" id="PTHR48101">
    <property type="entry name" value="METHYLMALONYL-COA MUTASE, MITOCHONDRIAL-RELATED"/>
    <property type="match status" value="1"/>
</dbReference>
<dbReference type="Pfam" id="PF02310">
    <property type="entry name" value="B12-binding"/>
    <property type="match status" value="1"/>
</dbReference>
<dbReference type="Pfam" id="PF01642">
    <property type="entry name" value="MM_CoA_mutase"/>
    <property type="match status" value="1"/>
</dbReference>
<dbReference type="SUPFAM" id="SSF52242">
    <property type="entry name" value="Cobalamin (vitamin B12)-binding domain"/>
    <property type="match status" value="1"/>
</dbReference>
<dbReference type="SUPFAM" id="SSF51703">
    <property type="entry name" value="Cobalamin (vitamin B12)-dependent enzymes"/>
    <property type="match status" value="1"/>
</dbReference>
<dbReference type="PROSITE" id="PS51332">
    <property type="entry name" value="B12_BINDING"/>
    <property type="match status" value="1"/>
</dbReference>
<dbReference type="PROSITE" id="PS00544">
    <property type="entry name" value="METMALONYL_COA_MUTASE"/>
    <property type="match status" value="1"/>
</dbReference>